<sequence>MTMFKKAVKSFQWGNHQVTMETGEIARQSGGAVIVNVDDTVVMGTVVASKSAKPGQSFFPLTVDYLEKTYAAGKIPGGFFRREGRPSEGETLISRLIDRPLRPLFPEGFLNEVQVVIHVLSINPDVPSDIPALIAASAALAISGIPFAGPVGAARVGYANGQYLLNPTRTEQATSELDLIVAGTQAAVLMVESEANQLSEEVMLGAVVYGHDQMQTAINAINELVAEAGKPEWDWTAAPKDEPFIAKVTALAEAPLREAYQIRQKGARSDKLKEITKEVMAKLQEEGDVDAVAVNDILFEIEAKIVRSQILNGEPRIDGRDTRTVRPIEIRNGVLPRTHGSALFTRGETQALVVATLGTARDEQIIDALEGEYRDRFMFHYNMPPFATGETGRVGSPKRREIGHGRLAKRALIPVLPSAEDFAYSIRVVSEITESNGSSSMASVCGGCLAMMDAGVPVKAHVAGVAMGLILDGNRFAVLTDILGDEDHLGDMDFKVAGTANGITALQMDIKVQGITKEIMQVALAQAKEGRLHILSKMQEAMGSVRTELSAHAPRMVSFKIHPDKIREVIGKGGATIQALTKETGCSIDIKDDGTVTIASTSAEGMAEAKARIEGITAEAEVGKIYEGPVVKLLEFGALVNILPGKDGLLHISEISNERVKEVKDYLAEGQVVRVKLLAADERGRLRLSLKAAMADEGGTIAPLAGAAEVVAEEAPASGESA</sequence>
<keyword id="KW-0963">Cytoplasm</keyword>
<keyword id="KW-0460">Magnesium</keyword>
<keyword id="KW-0479">Metal-binding</keyword>
<keyword id="KW-0548">Nucleotidyltransferase</keyword>
<keyword id="KW-1185">Reference proteome</keyword>
<keyword id="KW-0694">RNA-binding</keyword>
<keyword id="KW-0808">Transferase</keyword>
<gene>
    <name evidence="1" type="primary">pnp</name>
    <name type="ordered locus">Pnuc_1055</name>
</gene>
<accession>A4SXQ7</accession>
<feature type="chain" id="PRO_0000329761" description="Polyribonucleotide nucleotidyltransferase">
    <location>
        <begin position="1"/>
        <end position="722"/>
    </location>
</feature>
<feature type="domain" description="KH" evidence="1">
    <location>
        <begin position="554"/>
        <end position="613"/>
    </location>
</feature>
<feature type="domain" description="S1 motif" evidence="1">
    <location>
        <begin position="623"/>
        <end position="691"/>
    </location>
</feature>
<feature type="binding site" evidence="1">
    <location>
        <position position="487"/>
    </location>
    <ligand>
        <name>Mg(2+)</name>
        <dbReference type="ChEBI" id="CHEBI:18420"/>
    </ligand>
</feature>
<feature type="binding site" evidence="1">
    <location>
        <position position="493"/>
    </location>
    <ligand>
        <name>Mg(2+)</name>
        <dbReference type="ChEBI" id="CHEBI:18420"/>
    </ligand>
</feature>
<reference key="1">
    <citation type="journal article" date="2012" name="Stand. Genomic Sci.">
        <title>Complete genome sequence of Polynucleobacter necessarius subsp. asymbioticus type strain (QLW-P1DMWA-1(T)).</title>
        <authorList>
            <person name="Meincke L."/>
            <person name="Copeland A."/>
            <person name="Lapidus A."/>
            <person name="Lucas S."/>
            <person name="Berry K.W."/>
            <person name="Del Rio T.G."/>
            <person name="Hammon N."/>
            <person name="Dalin E."/>
            <person name="Tice H."/>
            <person name="Pitluck S."/>
            <person name="Richardson P."/>
            <person name="Bruce D."/>
            <person name="Goodwin L."/>
            <person name="Han C."/>
            <person name="Tapia R."/>
            <person name="Detter J.C."/>
            <person name="Schmutz J."/>
            <person name="Brettin T."/>
            <person name="Larimer F."/>
            <person name="Land M."/>
            <person name="Hauser L."/>
            <person name="Kyrpides N.C."/>
            <person name="Ivanova N."/>
            <person name="Goker M."/>
            <person name="Woyke T."/>
            <person name="Wu Q.L."/>
            <person name="Pockl M."/>
            <person name="Hahn M.W."/>
            <person name="Klenk H.P."/>
        </authorList>
    </citation>
    <scope>NUCLEOTIDE SEQUENCE [LARGE SCALE GENOMIC DNA]</scope>
    <source>
        <strain>DSM 18221 / CIP 109841 / QLW-P1DMWA-1</strain>
    </source>
</reference>
<comment type="function">
    <text evidence="1">Involved in mRNA degradation. Catalyzes the phosphorolysis of single-stranded polyribonucleotides processively in the 3'- to 5'-direction.</text>
</comment>
<comment type="catalytic activity">
    <reaction evidence="1">
        <text>RNA(n+1) + phosphate = RNA(n) + a ribonucleoside 5'-diphosphate</text>
        <dbReference type="Rhea" id="RHEA:22096"/>
        <dbReference type="Rhea" id="RHEA-COMP:14527"/>
        <dbReference type="Rhea" id="RHEA-COMP:17342"/>
        <dbReference type="ChEBI" id="CHEBI:43474"/>
        <dbReference type="ChEBI" id="CHEBI:57930"/>
        <dbReference type="ChEBI" id="CHEBI:140395"/>
        <dbReference type="EC" id="2.7.7.8"/>
    </reaction>
</comment>
<comment type="cofactor">
    <cofactor evidence="1">
        <name>Mg(2+)</name>
        <dbReference type="ChEBI" id="CHEBI:18420"/>
    </cofactor>
</comment>
<comment type="subcellular location">
    <subcellularLocation>
        <location evidence="1">Cytoplasm</location>
    </subcellularLocation>
</comment>
<comment type="similarity">
    <text evidence="1">Belongs to the polyribonucleotide nucleotidyltransferase family.</text>
</comment>
<organism>
    <name type="scientific">Polynucleobacter asymbioticus (strain DSM 18221 / CIP 109841 / QLW-P1DMWA-1)</name>
    <name type="common">Polynucleobacter necessarius subsp. asymbioticus</name>
    <dbReference type="NCBI Taxonomy" id="312153"/>
    <lineage>
        <taxon>Bacteria</taxon>
        <taxon>Pseudomonadati</taxon>
        <taxon>Pseudomonadota</taxon>
        <taxon>Betaproteobacteria</taxon>
        <taxon>Burkholderiales</taxon>
        <taxon>Burkholderiaceae</taxon>
        <taxon>Polynucleobacter</taxon>
    </lineage>
</organism>
<name>PNP_POLAQ</name>
<dbReference type="EC" id="2.7.7.8" evidence="1"/>
<dbReference type="EMBL" id="CP000655">
    <property type="protein sequence ID" value="ABP34271.1"/>
    <property type="molecule type" value="Genomic_DNA"/>
</dbReference>
<dbReference type="RefSeq" id="WP_011902896.1">
    <property type="nucleotide sequence ID" value="NC_009379.1"/>
</dbReference>
<dbReference type="SMR" id="A4SXQ7"/>
<dbReference type="GeneID" id="31481430"/>
<dbReference type="KEGG" id="pnu:Pnuc_1055"/>
<dbReference type="eggNOG" id="COG1185">
    <property type="taxonomic scope" value="Bacteria"/>
</dbReference>
<dbReference type="HOGENOM" id="CLU_004217_2_2_4"/>
<dbReference type="Proteomes" id="UP000000231">
    <property type="component" value="Chromosome"/>
</dbReference>
<dbReference type="GO" id="GO:0005829">
    <property type="term" value="C:cytosol"/>
    <property type="evidence" value="ECO:0007669"/>
    <property type="project" value="TreeGrafter"/>
</dbReference>
<dbReference type="GO" id="GO:0000175">
    <property type="term" value="F:3'-5'-RNA exonuclease activity"/>
    <property type="evidence" value="ECO:0007669"/>
    <property type="project" value="TreeGrafter"/>
</dbReference>
<dbReference type="GO" id="GO:0000287">
    <property type="term" value="F:magnesium ion binding"/>
    <property type="evidence" value="ECO:0007669"/>
    <property type="project" value="UniProtKB-UniRule"/>
</dbReference>
<dbReference type="GO" id="GO:0004654">
    <property type="term" value="F:polyribonucleotide nucleotidyltransferase activity"/>
    <property type="evidence" value="ECO:0007669"/>
    <property type="project" value="UniProtKB-UniRule"/>
</dbReference>
<dbReference type="GO" id="GO:0003723">
    <property type="term" value="F:RNA binding"/>
    <property type="evidence" value="ECO:0007669"/>
    <property type="project" value="UniProtKB-UniRule"/>
</dbReference>
<dbReference type="GO" id="GO:0006402">
    <property type="term" value="P:mRNA catabolic process"/>
    <property type="evidence" value="ECO:0007669"/>
    <property type="project" value="UniProtKB-UniRule"/>
</dbReference>
<dbReference type="GO" id="GO:0006396">
    <property type="term" value="P:RNA processing"/>
    <property type="evidence" value="ECO:0007669"/>
    <property type="project" value="InterPro"/>
</dbReference>
<dbReference type="CDD" id="cd02393">
    <property type="entry name" value="KH-I_PNPase"/>
    <property type="match status" value="1"/>
</dbReference>
<dbReference type="CDD" id="cd11363">
    <property type="entry name" value="RNase_PH_PNPase_1"/>
    <property type="match status" value="1"/>
</dbReference>
<dbReference type="CDD" id="cd11364">
    <property type="entry name" value="RNase_PH_PNPase_2"/>
    <property type="match status" value="1"/>
</dbReference>
<dbReference type="CDD" id="cd04472">
    <property type="entry name" value="S1_PNPase"/>
    <property type="match status" value="1"/>
</dbReference>
<dbReference type="FunFam" id="3.30.1370.10:FF:000001">
    <property type="entry name" value="Polyribonucleotide nucleotidyltransferase"/>
    <property type="match status" value="1"/>
</dbReference>
<dbReference type="FunFam" id="3.30.230.70:FF:000001">
    <property type="entry name" value="Polyribonucleotide nucleotidyltransferase"/>
    <property type="match status" value="1"/>
</dbReference>
<dbReference type="FunFam" id="3.30.230.70:FF:000002">
    <property type="entry name" value="Polyribonucleotide nucleotidyltransferase"/>
    <property type="match status" value="1"/>
</dbReference>
<dbReference type="FunFam" id="2.40.50.140:FF:000189">
    <property type="entry name" value="Polyribonucleotide nucleotidyltransferase, putative"/>
    <property type="match status" value="1"/>
</dbReference>
<dbReference type="Gene3D" id="3.30.230.70">
    <property type="entry name" value="GHMP Kinase, N-terminal domain"/>
    <property type="match status" value="2"/>
</dbReference>
<dbReference type="Gene3D" id="3.30.1370.10">
    <property type="entry name" value="K Homology domain, type 1"/>
    <property type="match status" value="1"/>
</dbReference>
<dbReference type="Gene3D" id="2.40.50.140">
    <property type="entry name" value="Nucleic acid-binding proteins"/>
    <property type="match status" value="1"/>
</dbReference>
<dbReference type="HAMAP" id="MF_01595">
    <property type="entry name" value="PNPase"/>
    <property type="match status" value="1"/>
</dbReference>
<dbReference type="InterPro" id="IPR001247">
    <property type="entry name" value="ExoRNase_PH_dom1"/>
</dbReference>
<dbReference type="InterPro" id="IPR015847">
    <property type="entry name" value="ExoRNase_PH_dom2"/>
</dbReference>
<dbReference type="InterPro" id="IPR036345">
    <property type="entry name" value="ExoRNase_PH_dom2_sf"/>
</dbReference>
<dbReference type="InterPro" id="IPR004087">
    <property type="entry name" value="KH_dom"/>
</dbReference>
<dbReference type="InterPro" id="IPR004088">
    <property type="entry name" value="KH_dom_type_1"/>
</dbReference>
<dbReference type="InterPro" id="IPR036612">
    <property type="entry name" value="KH_dom_type_1_sf"/>
</dbReference>
<dbReference type="InterPro" id="IPR012340">
    <property type="entry name" value="NA-bd_OB-fold"/>
</dbReference>
<dbReference type="InterPro" id="IPR012162">
    <property type="entry name" value="PNPase"/>
</dbReference>
<dbReference type="InterPro" id="IPR027408">
    <property type="entry name" value="PNPase/RNase_PH_dom_sf"/>
</dbReference>
<dbReference type="InterPro" id="IPR015848">
    <property type="entry name" value="PNPase_PH_RNA-bd_bac/org-type"/>
</dbReference>
<dbReference type="InterPro" id="IPR036456">
    <property type="entry name" value="PNPase_PH_RNA-bd_sf"/>
</dbReference>
<dbReference type="InterPro" id="IPR020568">
    <property type="entry name" value="Ribosomal_Su5_D2-typ_SF"/>
</dbReference>
<dbReference type="InterPro" id="IPR003029">
    <property type="entry name" value="S1_domain"/>
</dbReference>
<dbReference type="NCBIfam" id="TIGR03591">
    <property type="entry name" value="polynuc_phos"/>
    <property type="match status" value="1"/>
</dbReference>
<dbReference type="NCBIfam" id="NF008805">
    <property type="entry name" value="PRK11824.1"/>
    <property type="match status" value="1"/>
</dbReference>
<dbReference type="PANTHER" id="PTHR11252">
    <property type="entry name" value="POLYRIBONUCLEOTIDE NUCLEOTIDYLTRANSFERASE"/>
    <property type="match status" value="1"/>
</dbReference>
<dbReference type="PANTHER" id="PTHR11252:SF0">
    <property type="entry name" value="POLYRIBONUCLEOTIDE NUCLEOTIDYLTRANSFERASE 1, MITOCHONDRIAL"/>
    <property type="match status" value="1"/>
</dbReference>
<dbReference type="Pfam" id="PF00013">
    <property type="entry name" value="KH_1"/>
    <property type="match status" value="1"/>
</dbReference>
<dbReference type="Pfam" id="PF03726">
    <property type="entry name" value="PNPase"/>
    <property type="match status" value="1"/>
</dbReference>
<dbReference type="Pfam" id="PF01138">
    <property type="entry name" value="RNase_PH"/>
    <property type="match status" value="2"/>
</dbReference>
<dbReference type="Pfam" id="PF03725">
    <property type="entry name" value="RNase_PH_C"/>
    <property type="match status" value="2"/>
</dbReference>
<dbReference type="Pfam" id="PF00575">
    <property type="entry name" value="S1"/>
    <property type="match status" value="1"/>
</dbReference>
<dbReference type="PIRSF" id="PIRSF005499">
    <property type="entry name" value="PNPase"/>
    <property type="match status" value="1"/>
</dbReference>
<dbReference type="SMART" id="SM00322">
    <property type="entry name" value="KH"/>
    <property type="match status" value="1"/>
</dbReference>
<dbReference type="SMART" id="SM00316">
    <property type="entry name" value="S1"/>
    <property type="match status" value="1"/>
</dbReference>
<dbReference type="SUPFAM" id="SSF54791">
    <property type="entry name" value="Eukaryotic type KH-domain (KH-domain type I)"/>
    <property type="match status" value="1"/>
</dbReference>
<dbReference type="SUPFAM" id="SSF50249">
    <property type="entry name" value="Nucleic acid-binding proteins"/>
    <property type="match status" value="1"/>
</dbReference>
<dbReference type="SUPFAM" id="SSF46915">
    <property type="entry name" value="Polynucleotide phosphorylase/guanosine pentaphosphate synthase (PNPase/GPSI), domain 3"/>
    <property type="match status" value="1"/>
</dbReference>
<dbReference type="SUPFAM" id="SSF55666">
    <property type="entry name" value="Ribonuclease PH domain 2-like"/>
    <property type="match status" value="2"/>
</dbReference>
<dbReference type="SUPFAM" id="SSF54211">
    <property type="entry name" value="Ribosomal protein S5 domain 2-like"/>
    <property type="match status" value="2"/>
</dbReference>
<dbReference type="PROSITE" id="PS50084">
    <property type="entry name" value="KH_TYPE_1"/>
    <property type="match status" value="1"/>
</dbReference>
<dbReference type="PROSITE" id="PS50126">
    <property type="entry name" value="S1"/>
    <property type="match status" value="1"/>
</dbReference>
<proteinExistence type="inferred from homology"/>
<protein>
    <recommendedName>
        <fullName evidence="1">Polyribonucleotide nucleotidyltransferase</fullName>
        <ecNumber evidence="1">2.7.7.8</ecNumber>
    </recommendedName>
    <alternativeName>
        <fullName evidence="1">Polynucleotide phosphorylase</fullName>
        <shortName evidence="1">PNPase</shortName>
    </alternativeName>
</protein>
<evidence type="ECO:0000255" key="1">
    <source>
        <dbReference type="HAMAP-Rule" id="MF_01595"/>
    </source>
</evidence>